<name>MNMA_CHLFF</name>
<protein>
    <recommendedName>
        <fullName evidence="1">tRNA-specific 2-thiouridylase MnmA</fullName>
        <ecNumber evidence="1">2.8.1.13</ecNumber>
    </recommendedName>
</protein>
<reference key="1">
    <citation type="journal article" date="2006" name="DNA Res.">
        <title>Genome sequence of the cat pathogen, Chlamydophila felis.</title>
        <authorList>
            <person name="Azuma Y."/>
            <person name="Hirakawa H."/>
            <person name="Yamashita A."/>
            <person name="Cai Y."/>
            <person name="Rahman M.A."/>
            <person name="Suzuki H."/>
            <person name="Mitaku S."/>
            <person name="Toh H."/>
            <person name="Goto S."/>
            <person name="Murakami T."/>
            <person name="Sugi K."/>
            <person name="Hayashi H."/>
            <person name="Fukushi H."/>
            <person name="Hattori M."/>
            <person name="Kuhara S."/>
            <person name="Shirai M."/>
        </authorList>
    </citation>
    <scope>NUCLEOTIDE SEQUENCE [LARGE SCALE GENOMIC DNA]</scope>
    <source>
        <strain>Fe/C-56</strain>
    </source>
</reference>
<evidence type="ECO:0000255" key="1">
    <source>
        <dbReference type="HAMAP-Rule" id="MF_00144"/>
    </source>
</evidence>
<organism>
    <name type="scientific">Chlamydia felis (strain Fe/C-56)</name>
    <name type="common">Chlamydophila felis</name>
    <dbReference type="NCBI Taxonomy" id="264202"/>
    <lineage>
        <taxon>Bacteria</taxon>
        <taxon>Pseudomonadati</taxon>
        <taxon>Chlamydiota</taxon>
        <taxon>Chlamydiia</taxon>
        <taxon>Chlamydiales</taxon>
        <taxon>Chlamydiaceae</taxon>
        <taxon>Chlamydia/Chlamydophila group</taxon>
        <taxon>Chlamydia</taxon>
    </lineage>
</organism>
<feature type="chain" id="PRO_1000009515" description="tRNA-specific 2-thiouridylase MnmA">
    <location>
        <begin position="1"/>
        <end position="361"/>
    </location>
</feature>
<feature type="region of interest" description="Interaction with target base in tRNA" evidence="1">
    <location>
        <begin position="95"/>
        <end position="97"/>
    </location>
</feature>
<feature type="region of interest" description="Interaction with tRNA" evidence="1">
    <location>
        <begin position="146"/>
        <end position="148"/>
    </location>
</feature>
<feature type="region of interest" description="Interaction with tRNA" evidence="1">
    <location>
        <begin position="303"/>
        <end position="304"/>
    </location>
</feature>
<feature type="active site" description="Nucleophile" evidence="1">
    <location>
        <position position="100"/>
    </location>
</feature>
<feature type="active site" description="Cysteine persulfide intermediate" evidence="1">
    <location>
        <position position="196"/>
    </location>
</feature>
<feature type="binding site" evidence="1">
    <location>
        <begin position="8"/>
        <end position="15"/>
    </location>
    <ligand>
        <name>ATP</name>
        <dbReference type="ChEBI" id="CHEBI:30616"/>
    </ligand>
</feature>
<feature type="binding site" evidence="1">
    <location>
        <position position="35"/>
    </location>
    <ligand>
        <name>ATP</name>
        <dbReference type="ChEBI" id="CHEBI:30616"/>
    </ligand>
</feature>
<feature type="binding site" evidence="1">
    <location>
        <position position="124"/>
    </location>
    <ligand>
        <name>ATP</name>
        <dbReference type="ChEBI" id="CHEBI:30616"/>
    </ligand>
</feature>
<feature type="site" description="Interaction with tRNA" evidence="1">
    <location>
        <position position="125"/>
    </location>
</feature>
<feature type="site" description="Interaction with tRNA" evidence="1">
    <location>
        <position position="336"/>
    </location>
</feature>
<feature type="disulfide bond" description="Alternate" evidence="1">
    <location>
        <begin position="100"/>
        <end position="196"/>
    </location>
</feature>
<dbReference type="EC" id="2.8.1.13" evidence="1"/>
<dbReference type="EMBL" id="AP006861">
    <property type="protein sequence ID" value="BAE81425.1"/>
    <property type="molecule type" value="Genomic_DNA"/>
</dbReference>
<dbReference type="RefSeq" id="WP_011458204.1">
    <property type="nucleotide sequence ID" value="NC_007899.1"/>
</dbReference>
<dbReference type="SMR" id="Q253W3"/>
<dbReference type="STRING" id="264202.CF0653"/>
<dbReference type="KEGG" id="cfe:CF0653"/>
<dbReference type="eggNOG" id="COG0482">
    <property type="taxonomic scope" value="Bacteria"/>
</dbReference>
<dbReference type="HOGENOM" id="CLU_035188_1_0_0"/>
<dbReference type="OrthoDB" id="9800696at2"/>
<dbReference type="Proteomes" id="UP000001260">
    <property type="component" value="Chromosome"/>
</dbReference>
<dbReference type="GO" id="GO:0005737">
    <property type="term" value="C:cytoplasm"/>
    <property type="evidence" value="ECO:0007669"/>
    <property type="project" value="UniProtKB-SubCell"/>
</dbReference>
<dbReference type="GO" id="GO:0005524">
    <property type="term" value="F:ATP binding"/>
    <property type="evidence" value="ECO:0007669"/>
    <property type="project" value="UniProtKB-KW"/>
</dbReference>
<dbReference type="GO" id="GO:0000049">
    <property type="term" value="F:tRNA binding"/>
    <property type="evidence" value="ECO:0007669"/>
    <property type="project" value="UniProtKB-KW"/>
</dbReference>
<dbReference type="GO" id="GO:0103016">
    <property type="term" value="F:tRNA-uridine 2-sulfurtransferase activity"/>
    <property type="evidence" value="ECO:0007669"/>
    <property type="project" value="UniProtKB-EC"/>
</dbReference>
<dbReference type="GO" id="GO:0002143">
    <property type="term" value="P:tRNA wobble position uridine thiolation"/>
    <property type="evidence" value="ECO:0007669"/>
    <property type="project" value="TreeGrafter"/>
</dbReference>
<dbReference type="CDD" id="cd01998">
    <property type="entry name" value="MnmA_TRMU-like"/>
    <property type="match status" value="1"/>
</dbReference>
<dbReference type="FunFam" id="2.30.30.280:FF:000001">
    <property type="entry name" value="tRNA-specific 2-thiouridylase MnmA"/>
    <property type="match status" value="1"/>
</dbReference>
<dbReference type="FunFam" id="2.40.30.10:FF:000023">
    <property type="entry name" value="tRNA-specific 2-thiouridylase MnmA"/>
    <property type="match status" value="1"/>
</dbReference>
<dbReference type="FunFam" id="3.40.50.620:FF:000115">
    <property type="entry name" value="tRNA-specific 2-thiouridylase MnmA"/>
    <property type="match status" value="1"/>
</dbReference>
<dbReference type="Gene3D" id="2.30.30.280">
    <property type="entry name" value="Adenine nucleotide alpha hydrolases-like domains"/>
    <property type="match status" value="1"/>
</dbReference>
<dbReference type="Gene3D" id="3.40.50.620">
    <property type="entry name" value="HUPs"/>
    <property type="match status" value="1"/>
</dbReference>
<dbReference type="Gene3D" id="2.40.30.10">
    <property type="entry name" value="Translation factors"/>
    <property type="match status" value="1"/>
</dbReference>
<dbReference type="HAMAP" id="MF_00144">
    <property type="entry name" value="tRNA_thiouridyl_MnmA"/>
    <property type="match status" value="1"/>
</dbReference>
<dbReference type="InterPro" id="IPR004506">
    <property type="entry name" value="MnmA-like"/>
</dbReference>
<dbReference type="InterPro" id="IPR046885">
    <property type="entry name" value="MnmA-like_C"/>
</dbReference>
<dbReference type="InterPro" id="IPR046884">
    <property type="entry name" value="MnmA-like_central"/>
</dbReference>
<dbReference type="InterPro" id="IPR023382">
    <property type="entry name" value="MnmA-like_central_sf"/>
</dbReference>
<dbReference type="InterPro" id="IPR014729">
    <property type="entry name" value="Rossmann-like_a/b/a_fold"/>
</dbReference>
<dbReference type="NCBIfam" id="NF001138">
    <property type="entry name" value="PRK00143.1"/>
    <property type="match status" value="1"/>
</dbReference>
<dbReference type="NCBIfam" id="TIGR00420">
    <property type="entry name" value="trmU"/>
    <property type="match status" value="1"/>
</dbReference>
<dbReference type="PANTHER" id="PTHR11933:SF5">
    <property type="entry name" value="MITOCHONDRIAL TRNA-SPECIFIC 2-THIOURIDYLASE 1"/>
    <property type="match status" value="1"/>
</dbReference>
<dbReference type="PANTHER" id="PTHR11933">
    <property type="entry name" value="TRNA 5-METHYLAMINOMETHYL-2-THIOURIDYLATE -METHYLTRANSFERASE"/>
    <property type="match status" value="1"/>
</dbReference>
<dbReference type="Pfam" id="PF03054">
    <property type="entry name" value="tRNA_Me_trans"/>
    <property type="match status" value="1"/>
</dbReference>
<dbReference type="Pfam" id="PF20258">
    <property type="entry name" value="tRNA_Me_trans_C"/>
    <property type="match status" value="1"/>
</dbReference>
<dbReference type="Pfam" id="PF20259">
    <property type="entry name" value="tRNA_Me_trans_M"/>
    <property type="match status" value="1"/>
</dbReference>
<dbReference type="SUPFAM" id="SSF52402">
    <property type="entry name" value="Adenine nucleotide alpha hydrolases-like"/>
    <property type="match status" value="1"/>
</dbReference>
<proteinExistence type="inferred from homology"/>
<accession>Q253W3</accession>
<sequence length="361" mass="40444">MNKTVVVAMSGGVDSSVVAYLLKNYTSYKVLGLFMKNWEEEDGEGLCSTAKDYEDVEKVAGQLDIPYYTVSFAKEYRERVFSRFLTGYSEGYTPNPDVLCNREIKFDLLQKKVRELGGDFLATGHYCRVSPDENGVNLLRGIDPQKDQSYFLCGTRKESLENVIFPLGDKTKTEVRSIAAQAGLATAQKRDSTGICFIGKRPFKSFLEKFVPNLEGNIVDYDSQRVVGHHEGAHYYTIGQRRGLDLGGSEKPCYVVGKDMEKNIVYIVRGEDHPLLYQTELTARELNWFVSPKSITTCSAKVRYRSNDEECEILLRGEDEVLVRFASPVKAITPGQAIAFYDGERCLGGGVIEISMTPQSV</sequence>
<comment type="function">
    <text evidence="1">Catalyzes the 2-thiolation of uridine at the wobble position (U34) of tRNA, leading to the formation of s(2)U34.</text>
</comment>
<comment type="catalytic activity">
    <reaction evidence="1">
        <text>S-sulfanyl-L-cysteinyl-[protein] + uridine(34) in tRNA + AH2 + ATP = 2-thiouridine(34) in tRNA + L-cysteinyl-[protein] + A + AMP + diphosphate + H(+)</text>
        <dbReference type="Rhea" id="RHEA:47032"/>
        <dbReference type="Rhea" id="RHEA-COMP:10131"/>
        <dbReference type="Rhea" id="RHEA-COMP:11726"/>
        <dbReference type="Rhea" id="RHEA-COMP:11727"/>
        <dbReference type="Rhea" id="RHEA-COMP:11728"/>
        <dbReference type="ChEBI" id="CHEBI:13193"/>
        <dbReference type="ChEBI" id="CHEBI:15378"/>
        <dbReference type="ChEBI" id="CHEBI:17499"/>
        <dbReference type="ChEBI" id="CHEBI:29950"/>
        <dbReference type="ChEBI" id="CHEBI:30616"/>
        <dbReference type="ChEBI" id="CHEBI:33019"/>
        <dbReference type="ChEBI" id="CHEBI:61963"/>
        <dbReference type="ChEBI" id="CHEBI:65315"/>
        <dbReference type="ChEBI" id="CHEBI:87170"/>
        <dbReference type="ChEBI" id="CHEBI:456215"/>
        <dbReference type="EC" id="2.8.1.13"/>
    </reaction>
</comment>
<comment type="subcellular location">
    <subcellularLocation>
        <location evidence="1">Cytoplasm</location>
    </subcellularLocation>
</comment>
<comment type="similarity">
    <text evidence="1">Belongs to the MnmA/TRMU family.</text>
</comment>
<gene>
    <name evidence="1" type="primary">mnmA</name>
    <name type="synonym">trmU</name>
    <name type="ordered locus">CF0653</name>
</gene>
<keyword id="KW-0067">ATP-binding</keyword>
<keyword id="KW-0963">Cytoplasm</keyword>
<keyword id="KW-1015">Disulfide bond</keyword>
<keyword id="KW-0547">Nucleotide-binding</keyword>
<keyword id="KW-0694">RNA-binding</keyword>
<keyword id="KW-0808">Transferase</keyword>
<keyword id="KW-0819">tRNA processing</keyword>
<keyword id="KW-0820">tRNA-binding</keyword>